<dbReference type="EC" id="6.1.1.7" evidence="1"/>
<dbReference type="EMBL" id="BX571856">
    <property type="protein sequence ID" value="CAG40689.1"/>
    <property type="molecule type" value="Genomic_DNA"/>
</dbReference>
<dbReference type="RefSeq" id="WP_000734077.1">
    <property type="nucleotide sequence ID" value="NC_002952.2"/>
</dbReference>
<dbReference type="SMR" id="Q6GG85"/>
<dbReference type="KEGG" id="sar:SAR1697"/>
<dbReference type="HOGENOM" id="CLU_004485_1_1_9"/>
<dbReference type="Proteomes" id="UP000000596">
    <property type="component" value="Chromosome"/>
</dbReference>
<dbReference type="GO" id="GO:0005829">
    <property type="term" value="C:cytosol"/>
    <property type="evidence" value="ECO:0007669"/>
    <property type="project" value="TreeGrafter"/>
</dbReference>
<dbReference type="GO" id="GO:0004813">
    <property type="term" value="F:alanine-tRNA ligase activity"/>
    <property type="evidence" value="ECO:0007669"/>
    <property type="project" value="UniProtKB-UniRule"/>
</dbReference>
<dbReference type="GO" id="GO:0002161">
    <property type="term" value="F:aminoacyl-tRNA deacylase activity"/>
    <property type="evidence" value="ECO:0007669"/>
    <property type="project" value="TreeGrafter"/>
</dbReference>
<dbReference type="GO" id="GO:0005524">
    <property type="term" value="F:ATP binding"/>
    <property type="evidence" value="ECO:0007669"/>
    <property type="project" value="UniProtKB-UniRule"/>
</dbReference>
<dbReference type="GO" id="GO:0140096">
    <property type="term" value="F:catalytic activity, acting on a protein"/>
    <property type="evidence" value="ECO:0007669"/>
    <property type="project" value="UniProtKB-ARBA"/>
</dbReference>
<dbReference type="GO" id="GO:0016740">
    <property type="term" value="F:transferase activity"/>
    <property type="evidence" value="ECO:0007669"/>
    <property type="project" value="UniProtKB-ARBA"/>
</dbReference>
<dbReference type="GO" id="GO:0000049">
    <property type="term" value="F:tRNA binding"/>
    <property type="evidence" value="ECO:0007669"/>
    <property type="project" value="UniProtKB-KW"/>
</dbReference>
<dbReference type="GO" id="GO:0008270">
    <property type="term" value="F:zinc ion binding"/>
    <property type="evidence" value="ECO:0007669"/>
    <property type="project" value="UniProtKB-UniRule"/>
</dbReference>
<dbReference type="GO" id="GO:0006419">
    <property type="term" value="P:alanyl-tRNA aminoacylation"/>
    <property type="evidence" value="ECO:0007669"/>
    <property type="project" value="UniProtKB-UniRule"/>
</dbReference>
<dbReference type="CDD" id="cd00673">
    <property type="entry name" value="AlaRS_core"/>
    <property type="match status" value="1"/>
</dbReference>
<dbReference type="FunFam" id="2.40.30.130:FF:000001">
    <property type="entry name" value="Alanine--tRNA ligase"/>
    <property type="match status" value="1"/>
</dbReference>
<dbReference type="FunFam" id="3.10.310.40:FF:000001">
    <property type="entry name" value="Alanine--tRNA ligase"/>
    <property type="match status" value="1"/>
</dbReference>
<dbReference type="FunFam" id="3.30.54.20:FF:000001">
    <property type="entry name" value="Alanine--tRNA ligase"/>
    <property type="match status" value="1"/>
</dbReference>
<dbReference type="FunFam" id="3.30.930.10:FF:000046">
    <property type="entry name" value="Alanine--tRNA ligase"/>
    <property type="match status" value="1"/>
</dbReference>
<dbReference type="FunFam" id="3.30.980.10:FF:000004">
    <property type="entry name" value="Alanine--tRNA ligase, cytoplasmic"/>
    <property type="match status" value="1"/>
</dbReference>
<dbReference type="Gene3D" id="2.40.30.130">
    <property type="match status" value="1"/>
</dbReference>
<dbReference type="Gene3D" id="3.10.310.40">
    <property type="match status" value="1"/>
</dbReference>
<dbReference type="Gene3D" id="3.30.54.20">
    <property type="match status" value="1"/>
</dbReference>
<dbReference type="Gene3D" id="3.30.930.10">
    <property type="entry name" value="Bira Bifunctional Protein, Domain 2"/>
    <property type="match status" value="1"/>
</dbReference>
<dbReference type="Gene3D" id="3.30.980.10">
    <property type="entry name" value="Threonyl-trna Synthetase, Chain A, domain 2"/>
    <property type="match status" value="1"/>
</dbReference>
<dbReference type="HAMAP" id="MF_00036_B">
    <property type="entry name" value="Ala_tRNA_synth_B"/>
    <property type="match status" value="1"/>
</dbReference>
<dbReference type="InterPro" id="IPR045864">
    <property type="entry name" value="aa-tRNA-synth_II/BPL/LPL"/>
</dbReference>
<dbReference type="InterPro" id="IPR002318">
    <property type="entry name" value="Ala-tRNA-lgiase_IIc"/>
</dbReference>
<dbReference type="InterPro" id="IPR018162">
    <property type="entry name" value="Ala-tRNA-ligase_IIc_anticod-bd"/>
</dbReference>
<dbReference type="InterPro" id="IPR018165">
    <property type="entry name" value="Ala-tRNA-synth_IIc_core"/>
</dbReference>
<dbReference type="InterPro" id="IPR018164">
    <property type="entry name" value="Ala-tRNA-synth_IIc_N"/>
</dbReference>
<dbReference type="InterPro" id="IPR050058">
    <property type="entry name" value="Ala-tRNA_ligase"/>
</dbReference>
<dbReference type="InterPro" id="IPR023033">
    <property type="entry name" value="Ala_tRNA_ligase_euk/bac"/>
</dbReference>
<dbReference type="InterPro" id="IPR003156">
    <property type="entry name" value="DHHA1_dom"/>
</dbReference>
<dbReference type="InterPro" id="IPR018163">
    <property type="entry name" value="Thr/Ala-tRNA-synth_IIc_edit"/>
</dbReference>
<dbReference type="InterPro" id="IPR009000">
    <property type="entry name" value="Transl_B-barrel_sf"/>
</dbReference>
<dbReference type="InterPro" id="IPR012947">
    <property type="entry name" value="tRNA_SAD"/>
</dbReference>
<dbReference type="NCBIfam" id="TIGR00344">
    <property type="entry name" value="alaS"/>
    <property type="match status" value="1"/>
</dbReference>
<dbReference type="PANTHER" id="PTHR11777:SF9">
    <property type="entry name" value="ALANINE--TRNA LIGASE, CYTOPLASMIC"/>
    <property type="match status" value="1"/>
</dbReference>
<dbReference type="PANTHER" id="PTHR11777">
    <property type="entry name" value="ALANYL-TRNA SYNTHETASE"/>
    <property type="match status" value="1"/>
</dbReference>
<dbReference type="Pfam" id="PF02272">
    <property type="entry name" value="DHHA1"/>
    <property type="match status" value="1"/>
</dbReference>
<dbReference type="Pfam" id="PF01411">
    <property type="entry name" value="tRNA-synt_2c"/>
    <property type="match status" value="1"/>
</dbReference>
<dbReference type="Pfam" id="PF07973">
    <property type="entry name" value="tRNA_SAD"/>
    <property type="match status" value="1"/>
</dbReference>
<dbReference type="PRINTS" id="PR00980">
    <property type="entry name" value="TRNASYNTHALA"/>
</dbReference>
<dbReference type="SMART" id="SM00863">
    <property type="entry name" value="tRNA_SAD"/>
    <property type="match status" value="1"/>
</dbReference>
<dbReference type="SUPFAM" id="SSF55681">
    <property type="entry name" value="Class II aaRS and biotin synthetases"/>
    <property type="match status" value="1"/>
</dbReference>
<dbReference type="SUPFAM" id="SSF101353">
    <property type="entry name" value="Putative anticodon-binding domain of alanyl-tRNA synthetase (AlaRS)"/>
    <property type="match status" value="1"/>
</dbReference>
<dbReference type="SUPFAM" id="SSF55186">
    <property type="entry name" value="ThrRS/AlaRS common domain"/>
    <property type="match status" value="1"/>
</dbReference>
<dbReference type="SUPFAM" id="SSF50447">
    <property type="entry name" value="Translation proteins"/>
    <property type="match status" value="1"/>
</dbReference>
<dbReference type="PROSITE" id="PS50860">
    <property type="entry name" value="AA_TRNA_LIGASE_II_ALA"/>
    <property type="match status" value="1"/>
</dbReference>
<gene>
    <name evidence="1" type="primary">alaS</name>
    <name type="ordered locus">SAR1697</name>
</gene>
<protein>
    <recommendedName>
        <fullName evidence="1">Alanine--tRNA ligase</fullName>
        <ecNumber evidence="1">6.1.1.7</ecNumber>
    </recommendedName>
    <alternativeName>
        <fullName evidence="1">Alanyl-tRNA synthetase</fullName>
        <shortName evidence="1">AlaRS</shortName>
    </alternativeName>
</protein>
<feature type="chain" id="PRO_0000075202" description="Alanine--tRNA ligase">
    <location>
        <begin position="1"/>
        <end position="876"/>
    </location>
</feature>
<feature type="binding site" evidence="1">
    <location>
        <position position="565"/>
    </location>
    <ligand>
        <name>Zn(2+)</name>
        <dbReference type="ChEBI" id="CHEBI:29105"/>
    </ligand>
</feature>
<feature type="binding site" evidence="1">
    <location>
        <position position="569"/>
    </location>
    <ligand>
        <name>Zn(2+)</name>
        <dbReference type="ChEBI" id="CHEBI:29105"/>
    </ligand>
</feature>
<feature type="binding site" evidence="1">
    <location>
        <position position="667"/>
    </location>
    <ligand>
        <name>Zn(2+)</name>
        <dbReference type="ChEBI" id="CHEBI:29105"/>
    </ligand>
</feature>
<feature type="binding site" evidence="1">
    <location>
        <position position="671"/>
    </location>
    <ligand>
        <name>Zn(2+)</name>
        <dbReference type="ChEBI" id="CHEBI:29105"/>
    </ligand>
</feature>
<evidence type="ECO:0000255" key="1">
    <source>
        <dbReference type="HAMAP-Rule" id="MF_00036"/>
    </source>
</evidence>
<comment type="function">
    <text evidence="1">Catalyzes the attachment of alanine to tRNA(Ala) in a two-step reaction: alanine is first activated by ATP to form Ala-AMP and then transferred to the acceptor end of tRNA(Ala). Also edits incorrectly charged Ser-tRNA(Ala) and Gly-tRNA(Ala) via its editing domain.</text>
</comment>
<comment type="catalytic activity">
    <reaction evidence="1">
        <text>tRNA(Ala) + L-alanine + ATP = L-alanyl-tRNA(Ala) + AMP + diphosphate</text>
        <dbReference type="Rhea" id="RHEA:12540"/>
        <dbReference type="Rhea" id="RHEA-COMP:9657"/>
        <dbReference type="Rhea" id="RHEA-COMP:9923"/>
        <dbReference type="ChEBI" id="CHEBI:30616"/>
        <dbReference type="ChEBI" id="CHEBI:33019"/>
        <dbReference type="ChEBI" id="CHEBI:57972"/>
        <dbReference type="ChEBI" id="CHEBI:78442"/>
        <dbReference type="ChEBI" id="CHEBI:78497"/>
        <dbReference type="ChEBI" id="CHEBI:456215"/>
        <dbReference type="EC" id="6.1.1.7"/>
    </reaction>
</comment>
<comment type="cofactor">
    <cofactor evidence="1">
        <name>Zn(2+)</name>
        <dbReference type="ChEBI" id="CHEBI:29105"/>
    </cofactor>
    <text evidence="1">Binds 1 zinc ion per subunit.</text>
</comment>
<comment type="subcellular location">
    <subcellularLocation>
        <location evidence="1">Cytoplasm</location>
    </subcellularLocation>
</comment>
<comment type="domain">
    <text evidence="1">Consists of three domains; the N-terminal catalytic domain, the editing domain and the C-terminal C-Ala domain. The editing domain removes incorrectly charged amino acids, while the C-Ala domain, along with tRNA(Ala), serves as a bridge to cooperatively bring together the editing and aminoacylation centers thus stimulating deacylation of misacylated tRNAs.</text>
</comment>
<comment type="similarity">
    <text evidence="1">Belongs to the class-II aminoacyl-tRNA synthetase family.</text>
</comment>
<keyword id="KW-0030">Aminoacyl-tRNA synthetase</keyword>
<keyword id="KW-0067">ATP-binding</keyword>
<keyword id="KW-0963">Cytoplasm</keyword>
<keyword id="KW-0436">Ligase</keyword>
<keyword id="KW-0479">Metal-binding</keyword>
<keyword id="KW-0547">Nucleotide-binding</keyword>
<keyword id="KW-0648">Protein biosynthesis</keyword>
<keyword id="KW-0694">RNA-binding</keyword>
<keyword id="KW-0820">tRNA-binding</keyword>
<keyword id="KW-0862">Zinc</keyword>
<organism>
    <name type="scientific">Staphylococcus aureus (strain MRSA252)</name>
    <dbReference type="NCBI Taxonomy" id="282458"/>
    <lineage>
        <taxon>Bacteria</taxon>
        <taxon>Bacillati</taxon>
        <taxon>Bacillota</taxon>
        <taxon>Bacilli</taxon>
        <taxon>Bacillales</taxon>
        <taxon>Staphylococcaceae</taxon>
        <taxon>Staphylococcus</taxon>
    </lineage>
</organism>
<reference key="1">
    <citation type="journal article" date="2004" name="Proc. Natl. Acad. Sci. U.S.A.">
        <title>Complete genomes of two clinical Staphylococcus aureus strains: evidence for the rapid evolution of virulence and drug resistance.</title>
        <authorList>
            <person name="Holden M.T.G."/>
            <person name="Feil E.J."/>
            <person name="Lindsay J.A."/>
            <person name="Peacock S.J."/>
            <person name="Day N.P.J."/>
            <person name="Enright M.C."/>
            <person name="Foster T.J."/>
            <person name="Moore C.E."/>
            <person name="Hurst L."/>
            <person name="Atkin R."/>
            <person name="Barron A."/>
            <person name="Bason N."/>
            <person name="Bentley S.D."/>
            <person name="Chillingworth C."/>
            <person name="Chillingworth T."/>
            <person name="Churcher C."/>
            <person name="Clark L."/>
            <person name="Corton C."/>
            <person name="Cronin A."/>
            <person name="Doggett J."/>
            <person name="Dowd L."/>
            <person name="Feltwell T."/>
            <person name="Hance Z."/>
            <person name="Harris B."/>
            <person name="Hauser H."/>
            <person name="Holroyd S."/>
            <person name="Jagels K."/>
            <person name="James K.D."/>
            <person name="Lennard N."/>
            <person name="Line A."/>
            <person name="Mayes R."/>
            <person name="Moule S."/>
            <person name="Mungall K."/>
            <person name="Ormond D."/>
            <person name="Quail M.A."/>
            <person name="Rabbinowitsch E."/>
            <person name="Rutherford K.M."/>
            <person name="Sanders M."/>
            <person name="Sharp S."/>
            <person name="Simmonds M."/>
            <person name="Stevens K."/>
            <person name="Whitehead S."/>
            <person name="Barrell B.G."/>
            <person name="Spratt B.G."/>
            <person name="Parkhill J."/>
        </authorList>
    </citation>
    <scope>NUCLEOTIDE SEQUENCE [LARGE SCALE GENOMIC DNA]</scope>
    <source>
        <strain>MRSA252</strain>
    </source>
</reference>
<name>SYA_STAAR</name>
<accession>Q6GG85</accession>
<sequence length="876" mass="98533">MKKLKASEIRQKYLDFFVEKGHMVEPSAPLVPIDDDTLLWINSGVATLKKYFDGRETPKKPRIVNSQKAIRTNDIENVGFTARHHTFFEMLGNFSIGDYFKQEAIEFAWEFLTSDKWMGMEPDKLYVTIHPEDMEAYNIWHKDIGLEESRIIRIEGNFWDIGEGPSGPNTEIFYDRGEAYGQDDPAEEMYPGGENERYLEVWNLVFSEFNHNKDHSYTPLPNKNIDTGMGLERMASVSQNVRTNYETDLFMPIMNEIEKVSGKQYLVNNEQDVAFKVIADHIRTIAFAISDGALPANEGRGYVLRRLLRRAVRFSQTLGINEPFMYKLVDIVADIMEPYYPNVKEKADFIKRVIKSEEERFHETLEDGLAILNELIKKAKATTNEINGKDAFKLYDTYGFPIELTEEIAVQAGLKVDMTTFESEMQQQRDRARQARQNSQSMQVQSEVLKNITSASTFVGYDTATAQTTLTHLIYNGEEVSQVEAGETVYFMLTETPFYAVSGGQVADTGIVYNDNFEIAVSEVTKAPNGQNLHKGVVQFGQVNVGATVSAEVNQNDRRDIQKNHSATHLLHAALKSVLGDHVNQAGSLVEADRLRFDFSHFGPMTNDEIDQVERLVNEEIWKGIDVNIQEMDIVSAKEMGAMALFGEKYGDVVRVVNMAPFSIELCGGIHVRNTSEIGLFKIVSESGTGAGVRRIEALTGKAAFLYLEDIQEKFNTMKSQLKVKSDNQVVDKLTQLQDEEKALLKQLEQRDKEITSLKMGNIEDQVEEINGYKVLVTEVDVPNAKAIRSTMDDFKSKLQDTIIILASNVDDKVSMVATVPKSLTNNVKAGDLIKQMAPIVGGKGGGRPDMAQGGGTQPENISKSLSFIKDYIKNL</sequence>
<proteinExistence type="inferred from homology"/>